<sequence length="509" mass="55487">MDASKKKKTFNFPSAFTILFAILILAVGLTWVIPSGSYSKLTYNSTDNVFVVKAYGVDDKTYPATTDTLDNLNIKIKLSNFTEGVIKKPIAIPGTYQRVEQHHKGIEDITKSMVEGTIEAVDVMVFIFVLGGMIGVINRTGSFNAGLMALVKKTKGNEFFIVFCVSVLMVLGGTTCGIEEEAVAFYPILVPVFLALGYDAIVCVGAIFLAASMGTAFSTINPFSVVIASNAAGIQFTEGIGFRALGLVLGATCVIAYLYWYCKKIKADPSFSYTYDDREEFRQRYMKNFDPNTTIPFSARRKLILTLFCISFPIMIWGVMVGGWWFPQMAASFLAITIIIMFISGLSEKDIMESFTEGASELVGVSLIIGLARGVNLVLEQGMISDTILDYMSNVVSGMPGSVFILGQLVVFIFLGLIVPSSSGLAVLSMPIMAPLADSVGIPRDIVVSAYNWGQYAMLFLAPTGLVLVTLQMLQIPFDRWVKFVMPMIGCLLLIGSILLVVQVSLYSV</sequence>
<accession>P44023</accession>
<organism>
    <name type="scientific">Haemophilus influenzae (strain ATCC 51907 / DSM 11121 / KW20 / Rd)</name>
    <dbReference type="NCBI Taxonomy" id="71421"/>
    <lineage>
        <taxon>Bacteria</taxon>
        <taxon>Pseudomonadati</taxon>
        <taxon>Pseudomonadota</taxon>
        <taxon>Gammaproteobacteria</taxon>
        <taxon>Pasteurellales</taxon>
        <taxon>Pasteurellaceae</taxon>
        <taxon>Haemophilus</taxon>
    </lineage>
</organism>
<comment type="subcellular location">
    <subcellularLocation>
        <location evidence="2">Cell membrane</location>
        <topology evidence="2">Multi-pass membrane protein</topology>
    </subcellularLocation>
</comment>
<comment type="similarity">
    <text evidence="2">To E.coli YfcC.</text>
</comment>
<comment type="similarity">
    <text evidence="2">To B.subtilis YcgA.</text>
</comment>
<protein>
    <recommendedName>
        <fullName>Uncharacterized protein HI_0594</fullName>
    </recommendedName>
</protein>
<evidence type="ECO:0000255" key="1"/>
<evidence type="ECO:0000305" key="2"/>
<keyword id="KW-1003">Cell membrane</keyword>
<keyword id="KW-0472">Membrane</keyword>
<keyword id="KW-1185">Reference proteome</keyword>
<keyword id="KW-0812">Transmembrane</keyword>
<keyword id="KW-1133">Transmembrane helix</keyword>
<reference key="1">
    <citation type="journal article" date="1995" name="Science">
        <title>Whole-genome random sequencing and assembly of Haemophilus influenzae Rd.</title>
        <authorList>
            <person name="Fleischmann R.D."/>
            <person name="Adams M.D."/>
            <person name="White O."/>
            <person name="Clayton R.A."/>
            <person name="Kirkness E.F."/>
            <person name="Kerlavage A.R."/>
            <person name="Bult C.J."/>
            <person name="Tomb J.-F."/>
            <person name="Dougherty B.A."/>
            <person name="Merrick J.M."/>
            <person name="McKenney K."/>
            <person name="Sutton G.G."/>
            <person name="FitzHugh W."/>
            <person name="Fields C.A."/>
            <person name="Gocayne J.D."/>
            <person name="Scott J.D."/>
            <person name="Shirley R."/>
            <person name="Liu L.-I."/>
            <person name="Glodek A."/>
            <person name="Kelley J.M."/>
            <person name="Weidman J.F."/>
            <person name="Phillips C.A."/>
            <person name="Spriggs T."/>
            <person name="Hedblom E."/>
            <person name="Cotton M.D."/>
            <person name="Utterback T.R."/>
            <person name="Hanna M.C."/>
            <person name="Nguyen D.T."/>
            <person name="Saudek D.M."/>
            <person name="Brandon R.C."/>
            <person name="Fine L.D."/>
            <person name="Fritchman J.L."/>
            <person name="Fuhrmann J.L."/>
            <person name="Geoghagen N.S.M."/>
            <person name="Gnehm C.L."/>
            <person name="McDonald L.A."/>
            <person name="Small K.V."/>
            <person name="Fraser C.M."/>
            <person name="Smith H.O."/>
            <person name="Venter J.C."/>
        </authorList>
    </citation>
    <scope>NUCLEOTIDE SEQUENCE [LARGE SCALE GENOMIC DNA]</scope>
    <source>
        <strain>ATCC 51907 / DSM 11121 / KW20 / Rd</strain>
    </source>
</reference>
<dbReference type="EMBL" id="L42023">
    <property type="protein sequence ID" value="AAC22251.1"/>
    <property type="molecule type" value="Genomic_DNA"/>
</dbReference>
<dbReference type="PIR" id="E64010">
    <property type="entry name" value="E64010"/>
</dbReference>
<dbReference type="RefSeq" id="NP_438751.1">
    <property type="nucleotide sequence ID" value="NC_000907.1"/>
</dbReference>
<dbReference type="STRING" id="71421.HI_0594"/>
<dbReference type="EnsemblBacteria" id="AAC22251">
    <property type="protein sequence ID" value="AAC22251"/>
    <property type="gene ID" value="HI_0594"/>
</dbReference>
<dbReference type="KEGG" id="hin:HI_0594"/>
<dbReference type="PATRIC" id="fig|71421.8.peg.615"/>
<dbReference type="eggNOG" id="COG1288">
    <property type="taxonomic scope" value="Bacteria"/>
</dbReference>
<dbReference type="HOGENOM" id="CLU_035307_0_1_6"/>
<dbReference type="OrthoDB" id="255482at2"/>
<dbReference type="PhylomeDB" id="P44023"/>
<dbReference type="BioCyc" id="HINF71421:G1GJ1-604-MONOMER"/>
<dbReference type="Proteomes" id="UP000000579">
    <property type="component" value="Chromosome"/>
</dbReference>
<dbReference type="GO" id="GO:0005886">
    <property type="term" value="C:plasma membrane"/>
    <property type="evidence" value="ECO:0000318"/>
    <property type="project" value="GO_Central"/>
</dbReference>
<dbReference type="InterPro" id="IPR018385">
    <property type="entry name" value="C4_dicarb_anaerob_car-like"/>
</dbReference>
<dbReference type="InterPro" id="IPR051679">
    <property type="entry name" value="DASS-Related_Transporters"/>
</dbReference>
<dbReference type="PANTHER" id="PTHR43652:SF6">
    <property type="entry name" value="ARGININE REPRESSOR"/>
    <property type="match status" value="1"/>
</dbReference>
<dbReference type="PANTHER" id="PTHR43652">
    <property type="entry name" value="BASIC AMINO ACID ANTIPORTER YFCC-RELATED"/>
    <property type="match status" value="1"/>
</dbReference>
<dbReference type="Pfam" id="PF03606">
    <property type="entry name" value="DcuC"/>
    <property type="match status" value="1"/>
</dbReference>
<gene>
    <name type="ordered locus">HI_0594</name>
</gene>
<name>Y594_HAEIN</name>
<feature type="chain" id="PRO_0000169192" description="Uncharacterized protein HI_0594">
    <location>
        <begin position="1"/>
        <end position="509"/>
    </location>
</feature>
<feature type="transmembrane region" description="Helical" evidence="1">
    <location>
        <begin position="14"/>
        <end position="34"/>
    </location>
</feature>
<feature type="transmembrane region" description="Helical" evidence="1">
    <location>
        <begin position="117"/>
        <end position="137"/>
    </location>
</feature>
<feature type="transmembrane region" description="Helical" evidence="1">
    <location>
        <begin position="158"/>
        <end position="178"/>
    </location>
</feature>
<feature type="transmembrane region" description="Helical" evidence="1">
    <location>
        <begin position="188"/>
        <end position="208"/>
    </location>
</feature>
<feature type="transmembrane region" description="Helical" evidence="1">
    <location>
        <begin position="209"/>
        <end position="229"/>
    </location>
</feature>
<feature type="transmembrane region" description="Helical" evidence="1">
    <location>
        <begin position="240"/>
        <end position="260"/>
    </location>
</feature>
<feature type="transmembrane region" description="Helical" evidence="1">
    <location>
        <begin position="303"/>
        <end position="323"/>
    </location>
</feature>
<feature type="transmembrane region" description="Helical" evidence="1">
    <location>
        <begin position="324"/>
        <end position="344"/>
    </location>
</feature>
<feature type="transmembrane region" description="Helical" evidence="1">
    <location>
        <begin position="359"/>
        <end position="379"/>
    </location>
</feature>
<feature type="transmembrane region" description="Helical" evidence="1">
    <location>
        <begin position="399"/>
        <end position="419"/>
    </location>
</feature>
<feature type="transmembrane region" description="Helical" evidence="1">
    <location>
        <begin position="423"/>
        <end position="443"/>
    </location>
</feature>
<feature type="transmembrane region" description="Helical" evidence="1">
    <location>
        <begin position="458"/>
        <end position="478"/>
    </location>
</feature>
<feature type="transmembrane region" description="Helical" evidence="1">
    <location>
        <begin position="484"/>
        <end position="504"/>
    </location>
</feature>
<proteinExistence type="predicted"/>